<organism>
    <name type="scientific">Saccharomyces cerevisiae (strain ATCC 204508 / S288c)</name>
    <name type="common">Baker's yeast</name>
    <dbReference type="NCBI Taxonomy" id="559292"/>
    <lineage>
        <taxon>Eukaryota</taxon>
        <taxon>Fungi</taxon>
        <taxon>Dikarya</taxon>
        <taxon>Ascomycota</taxon>
        <taxon>Saccharomycotina</taxon>
        <taxon>Saccharomycetes</taxon>
        <taxon>Saccharomycetales</taxon>
        <taxon>Saccharomycetaceae</taxon>
        <taxon>Saccharomyces</taxon>
    </lineage>
</organism>
<accession>P53914</accession>
<accession>D6W150</accession>
<proteinExistence type="evidence at protein level"/>
<gene>
    <name evidence="9" type="primary">KRE33</name>
    <name evidence="2" type="synonym">NAT10</name>
    <name evidence="10" type="synonym">RRA1</name>
    <name evidence="13" type="ordered locus">YNL132W</name>
    <name type="ORF">N1216</name>
    <name type="ORF">N1858</name>
</gene>
<evidence type="ECO:0000250" key="1">
    <source>
        <dbReference type="UniProtKB" id="P76562"/>
    </source>
</evidence>
<evidence type="ECO:0000255" key="2">
    <source>
        <dbReference type="HAMAP-Rule" id="MF_03211"/>
    </source>
</evidence>
<evidence type="ECO:0000256" key="3">
    <source>
        <dbReference type="SAM" id="MobiDB-lite"/>
    </source>
</evidence>
<evidence type="ECO:0000269" key="4">
    <source>
    </source>
</evidence>
<evidence type="ECO:0000269" key="5">
    <source>
    </source>
</evidence>
<evidence type="ECO:0000269" key="6">
    <source>
    </source>
</evidence>
<evidence type="ECO:0000269" key="7">
    <source>
    </source>
</evidence>
<evidence type="ECO:0000269" key="8">
    <source>
    </source>
</evidence>
<evidence type="ECO:0000303" key="9">
    <source>
    </source>
</evidence>
<evidence type="ECO:0000303" key="10">
    <source>
    </source>
</evidence>
<evidence type="ECO:0000303" key="11">
    <source>
    </source>
</evidence>
<evidence type="ECO:0000305" key="12"/>
<evidence type="ECO:0000312" key="13">
    <source>
        <dbReference type="SGD" id="S000005076"/>
    </source>
</evidence>
<evidence type="ECO:0007744" key="14">
    <source>
    </source>
</evidence>
<evidence type="ECO:0007744" key="15">
    <source>
    </source>
</evidence>
<feature type="chain" id="PRO_0000215890" description="RNA cytidine acetyltransferase">
    <location>
        <begin position="1"/>
        <end position="1056"/>
    </location>
</feature>
<feature type="domain" description="N-acetyltransferase" evidence="2">
    <location>
        <begin position="566"/>
        <end position="706"/>
    </location>
</feature>
<feature type="region of interest" description="Disordered" evidence="3">
    <location>
        <begin position="433"/>
        <end position="463"/>
    </location>
</feature>
<feature type="compositionally biased region" description="Polar residues" evidence="3">
    <location>
        <begin position="433"/>
        <end position="446"/>
    </location>
</feature>
<feature type="compositionally biased region" description="Basic and acidic residues" evidence="3">
    <location>
        <begin position="449"/>
        <end position="463"/>
    </location>
</feature>
<feature type="binding site" evidence="1 2">
    <location>
        <begin position="286"/>
        <end position="295"/>
    </location>
    <ligand>
        <name>ATP</name>
        <dbReference type="ChEBI" id="CHEBI:30616"/>
    </ligand>
</feature>
<feature type="binding site" evidence="1 2">
    <location>
        <position position="475"/>
    </location>
    <ligand>
        <name>ATP</name>
        <dbReference type="ChEBI" id="CHEBI:30616"/>
    </ligand>
</feature>
<feature type="binding site" evidence="1 2">
    <location>
        <begin position="638"/>
        <end position="640"/>
    </location>
    <ligand>
        <name>acetyl-CoA</name>
        <dbReference type="ChEBI" id="CHEBI:57288"/>
    </ligand>
</feature>
<feature type="binding site" evidence="1 2">
    <location>
        <begin position="645"/>
        <end position="651"/>
    </location>
    <ligand>
        <name>acetyl-CoA</name>
        <dbReference type="ChEBI" id="CHEBI:57288"/>
    </ligand>
</feature>
<feature type="binding site" evidence="1 2">
    <location>
        <position position="739"/>
    </location>
    <ligand>
        <name>acetyl-CoA</name>
        <dbReference type="ChEBI" id="CHEBI:57288"/>
    </ligand>
</feature>
<feature type="modified residue" description="Phosphoserine" evidence="14 15">
    <location>
        <position position="1001"/>
    </location>
</feature>
<feature type="modified residue" description="Phosphoserine" evidence="15">
    <location>
        <position position="1007"/>
    </location>
</feature>
<feature type="modified residue" description="Phosphoserine" evidence="15">
    <location>
        <position position="1010"/>
    </location>
</feature>
<feature type="mutagenesis site" description="Reduces 18S rRNA acetylation by 80% and tRNA acetylation by 47%." evidence="8">
    <original>K</original>
    <variation>A</variation>
    <location>
        <position position="289"/>
    </location>
</feature>
<feature type="mutagenesis site" description="Total loss of 18S rRNA acetylation and tRNA acetylation." evidence="8">
    <original>H</original>
    <variation>A</variation>
    <location>
        <position position="545"/>
    </location>
</feature>
<feature type="mutagenesis site" description="Total loss of 18S rRNA acetylation and tRNA acetylation." evidence="8">
    <original>R</original>
    <variation>A</variation>
    <location>
        <position position="637"/>
    </location>
</feature>
<keyword id="KW-0002">3D-structure</keyword>
<keyword id="KW-0012">Acyltransferase</keyword>
<keyword id="KW-0067">ATP-binding</keyword>
<keyword id="KW-0547">Nucleotide-binding</keyword>
<keyword id="KW-0539">Nucleus</keyword>
<keyword id="KW-0597">Phosphoprotein</keyword>
<keyword id="KW-1185">Reference proteome</keyword>
<keyword id="KW-0698">rRNA processing</keyword>
<keyword id="KW-0808">Transferase</keyword>
<keyword id="KW-0819">tRNA processing</keyword>
<name>NAT10_YEAST</name>
<comment type="function">
    <text evidence="2 7 8">RNA cytidine acetyltransferase with specificity toward both 18S rRNA and tRNAs. Catalyzes the formation of N(4)-acetylcytidine (ac4C) at positions 1280 and 1773 in 18S rRNA. Required for early nucleolar cleavages of precursor rRNA at sites A0, A1 and A2 during 18S rRNA synthesis (PubMed:25086048, PubMed:25653167). Catalyzes the formation of ac4C at position 12 in serine and leucine tRNAs. Requires the tRNA-binding adapter protein TAN1 for full tRNA acetyltransferase activity but not for 18S rRNA acetylation (PubMed:25653167).</text>
</comment>
<comment type="catalytic activity">
    <reaction evidence="2 7 8">
        <text>a cytidine in 18S rRNA + acetyl-CoA + ATP + H2O = an N(4)-acetylcytidine in 18S rRNA + ADP + phosphate + CoA + H(+)</text>
        <dbReference type="Rhea" id="RHEA:51424"/>
        <dbReference type="Rhea" id="RHEA-COMP:13575"/>
        <dbReference type="Rhea" id="RHEA-COMP:13576"/>
        <dbReference type="ChEBI" id="CHEBI:15377"/>
        <dbReference type="ChEBI" id="CHEBI:15378"/>
        <dbReference type="ChEBI" id="CHEBI:30616"/>
        <dbReference type="ChEBI" id="CHEBI:43474"/>
        <dbReference type="ChEBI" id="CHEBI:57287"/>
        <dbReference type="ChEBI" id="CHEBI:57288"/>
        <dbReference type="ChEBI" id="CHEBI:74900"/>
        <dbReference type="ChEBI" id="CHEBI:82748"/>
        <dbReference type="ChEBI" id="CHEBI:456216"/>
    </reaction>
</comment>
<comment type="catalytic activity">
    <reaction evidence="2 8">
        <text>a cytidine in tRNA + acetyl-CoA + ATP + H2O = an N(4)-acetylcytidine in tRNA + ADP + phosphate + CoA + H(+)</text>
        <dbReference type="Rhea" id="RHEA:53876"/>
        <dbReference type="Rhea" id="RHEA-COMP:13670"/>
        <dbReference type="Rhea" id="RHEA-COMP:13671"/>
        <dbReference type="ChEBI" id="CHEBI:15377"/>
        <dbReference type="ChEBI" id="CHEBI:15378"/>
        <dbReference type="ChEBI" id="CHEBI:30616"/>
        <dbReference type="ChEBI" id="CHEBI:43474"/>
        <dbReference type="ChEBI" id="CHEBI:57287"/>
        <dbReference type="ChEBI" id="CHEBI:57288"/>
        <dbReference type="ChEBI" id="CHEBI:74900"/>
        <dbReference type="ChEBI" id="CHEBI:82748"/>
        <dbReference type="ChEBI" id="CHEBI:456216"/>
    </reaction>
</comment>
<comment type="subunit">
    <text evidence="2 4 8">Interacts with TAN1 (PubMed:25653167). Associates with 90S pre-ribosomal particles (PubMed:12150911).</text>
</comment>
<comment type="interaction">
    <interactant intactId="EBI-28914">
        <id>P53914</id>
    </interactant>
    <interactant intactId="EBI-34121">
        <id>Q06344</id>
        <label>ESF1</label>
    </interactant>
    <organismsDiffer>false</organismsDiffer>
    <experiments>3</experiments>
</comment>
<comment type="interaction">
    <interactant intactId="EBI-28914">
        <id>P53914</id>
    </interactant>
    <interactant intactId="EBI-16011">
        <id>Q05022</id>
        <label>RRP5</label>
    </interactant>
    <organismsDiffer>false</organismsDiffer>
    <experiments>3</experiments>
</comment>
<comment type="interaction">
    <interactant intactId="EBI-28914">
        <id>P53914</id>
    </interactant>
    <interactant intactId="EBI-4534">
        <id>P40362</id>
        <label>UTP18</label>
    </interactant>
    <organismsDiffer>false</organismsDiffer>
    <experiments>3</experiments>
</comment>
<comment type="subcellular location">
    <subcellularLocation>
        <location evidence="2 6">Nucleus</location>
        <location evidence="2 6">Nucleolus</location>
    </subcellularLocation>
</comment>
<comment type="disruption phenotype">
    <text evidence="4 5 8">Leads to a strong inhibition of 18S rRNA synthesis (PubMed:25653167). Deletion results in an altered alkali-soluble beta-glucan phenotype (PubMed:12150911). Heterozygous mutants show haploinsufficiency in K1 killer toxin resistance (PubMed:12663529).</text>
</comment>
<comment type="similarity">
    <text evidence="2">Belongs to the RNA cytidine acetyltransferase family. NAT10 subfamily.</text>
</comment>
<protein>
    <recommendedName>
        <fullName evidence="2 12">RNA cytidine acetyltransferase</fullName>
        <ecNumber evidence="2">2.3.1.-</ecNumber>
    </recommendedName>
    <alternativeName>
        <fullName evidence="2 11">18S rRNA cytosine acetyltransferase</fullName>
    </alternativeName>
    <alternativeName>
        <fullName evidence="9">Killer toxin-resistance protein 33</fullName>
    </alternativeName>
    <alternativeName>
        <fullName evidence="10">Ribosomal RNA cytidine acetyltransferase 1</fullName>
    </alternativeName>
</protein>
<reference key="1">
    <citation type="journal article" date="1995" name="Yeast">
        <title>A 43.5 kb segment of yeast chromosome XIV, which contains MFA2, MEP2, CAP/SRV2, NAM9, FKB1/FPR1/RBP1, MOM22 and CPT1, predicts an adenosine deaminase gene and 14 new open reading frames.</title>
        <authorList>
            <person name="Mallet L."/>
            <person name="Bussereau F."/>
            <person name="Jacquet M."/>
        </authorList>
    </citation>
    <scope>NUCLEOTIDE SEQUENCE [GENOMIC DNA]</scope>
    <source>
        <strain>ATCC 204508 / S288c</strain>
    </source>
</reference>
<reference key="2">
    <citation type="journal article" date="1997" name="Nature">
        <title>The nucleotide sequence of Saccharomyces cerevisiae chromosome XIV and its evolutionary implications.</title>
        <authorList>
            <person name="Philippsen P."/>
            <person name="Kleine K."/>
            <person name="Poehlmann R."/>
            <person name="Duesterhoeft A."/>
            <person name="Hamberg K."/>
            <person name="Hegemann J.H."/>
            <person name="Obermaier B."/>
            <person name="Urrestarazu L.A."/>
            <person name="Aert R."/>
            <person name="Albermann K."/>
            <person name="Altmann R."/>
            <person name="Andre B."/>
            <person name="Baladron V."/>
            <person name="Ballesta J.P.G."/>
            <person name="Becam A.-M."/>
            <person name="Beinhauer J.D."/>
            <person name="Boskovic J."/>
            <person name="Buitrago M.J."/>
            <person name="Bussereau F."/>
            <person name="Coster F."/>
            <person name="Crouzet M."/>
            <person name="D'Angelo M."/>
            <person name="Dal Pero F."/>
            <person name="De Antoni A."/>
            <person name="del Rey F."/>
            <person name="Doignon F."/>
            <person name="Domdey H."/>
            <person name="Dubois E."/>
            <person name="Fiedler T.A."/>
            <person name="Fleig U."/>
            <person name="Floeth M."/>
            <person name="Fritz C."/>
            <person name="Gaillardin C."/>
            <person name="Garcia-Cantalejo J.M."/>
            <person name="Glansdorff N."/>
            <person name="Goffeau A."/>
            <person name="Gueldener U."/>
            <person name="Herbert C.J."/>
            <person name="Heumann K."/>
            <person name="Heuss-Neitzel D."/>
            <person name="Hilbert H."/>
            <person name="Hinni K."/>
            <person name="Iraqui Houssaini I."/>
            <person name="Jacquet M."/>
            <person name="Jimenez A."/>
            <person name="Jonniaux J.-L."/>
            <person name="Karpfinger-Hartl L."/>
            <person name="Lanfranchi G."/>
            <person name="Lepingle A."/>
            <person name="Levesque H."/>
            <person name="Lyck R."/>
            <person name="Maftahi M."/>
            <person name="Mallet L."/>
            <person name="Maurer C.T.C."/>
            <person name="Messenguy F."/>
            <person name="Mewes H.-W."/>
            <person name="Moestl D."/>
            <person name="Nasr F."/>
            <person name="Nicaud J.-M."/>
            <person name="Niedenthal R.K."/>
            <person name="Pandolfo D."/>
            <person name="Pierard A."/>
            <person name="Piravandi E."/>
            <person name="Planta R.J."/>
            <person name="Pohl T.M."/>
            <person name="Purnelle B."/>
            <person name="Rebischung C."/>
            <person name="Remacha M.A."/>
            <person name="Revuelta J.L."/>
            <person name="Rinke M."/>
            <person name="Saiz J.E."/>
            <person name="Sartorello F."/>
            <person name="Scherens B."/>
            <person name="Sen-Gupta M."/>
            <person name="Soler-Mira A."/>
            <person name="Urbanus J.H.M."/>
            <person name="Valle G."/>
            <person name="Van Dyck L."/>
            <person name="Verhasselt P."/>
            <person name="Vierendeels F."/>
            <person name="Vissers S."/>
            <person name="Voet M."/>
            <person name="Volckaert G."/>
            <person name="Wach A."/>
            <person name="Wambutt R."/>
            <person name="Wedler H."/>
            <person name="Zollner A."/>
            <person name="Hani J."/>
        </authorList>
    </citation>
    <scope>NUCLEOTIDE SEQUENCE [LARGE SCALE GENOMIC DNA]</scope>
    <source>
        <strain>ATCC 204508 / S288c</strain>
    </source>
</reference>
<reference key="3">
    <citation type="journal article" date="2014" name="G3 (Bethesda)">
        <title>The reference genome sequence of Saccharomyces cerevisiae: Then and now.</title>
        <authorList>
            <person name="Engel S.R."/>
            <person name="Dietrich F.S."/>
            <person name="Fisk D.G."/>
            <person name="Binkley G."/>
            <person name="Balakrishnan R."/>
            <person name="Costanzo M.C."/>
            <person name="Dwight S.S."/>
            <person name="Hitz B.C."/>
            <person name="Karra K."/>
            <person name="Nash R.S."/>
            <person name="Weng S."/>
            <person name="Wong E.D."/>
            <person name="Lloyd P."/>
            <person name="Skrzypek M.S."/>
            <person name="Miyasato S.R."/>
            <person name="Simison M."/>
            <person name="Cherry J.M."/>
        </authorList>
    </citation>
    <scope>GENOME REANNOTATION</scope>
    <source>
        <strain>ATCC 204508 / S288c</strain>
    </source>
</reference>
<reference key="4">
    <citation type="journal article" date="2002" name="Mol. Cell">
        <title>90S pre-ribosomes include the 35S pre-rRNA, the U3 snoRNP, and 40S subunit processing factors but predominantly lack 60S synthesis factors.</title>
        <authorList>
            <person name="Grandi P."/>
            <person name="Rybin V."/>
            <person name="Bassler J."/>
            <person name="Petfalski E."/>
            <person name="Strauss D."/>
            <person name="Marzioch M."/>
            <person name="Schaefer T."/>
            <person name="Kuster B."/>
            <person name="Tschochner H."/>
            <person name="Tollervey D."/>
            <person name="Gavin A.-C."/>
            <person name="Hurt E."/>
        </authorList>
    </citation>
    <scope>IDENTIFICATION IN THE 90S PRE-RIBOSOMAL PARTICLE BY MASS SPECTROMETRY</scope>
    <scope>DISRUPTION PHENOTYPE</scope>
</reference>
<reference key="5">
    <citation type="journal article" date="2003" name="Genetics">
        <title>A Saccharomyces cerevisiae genome-wide mutant screen for altered sensitivity to K1 killer toxin.</title>
        <authorList>
            <person name="Page N."/>
            <person name="Gerard-Vincent M."/>
            <person name="Menard P."/>
            <person name="Beaulieu M."/>
            <person name="Azuma M."/>
            <person name="Dijkgraaf G.J.P."/>
            <person name="Li H."/>
            <person name="Marcoux J."/>
            <person name="Nguyen T."/>
            <person name="Dowse T."/>
            <person name="Sdicu A.-M."/>
            <person name="Bussey H."/>
        </authorList>
    </citation>
    <scope>DISRUPTION PHENOTYPE</scope>
</reference>
<reference key="6">
    <citation type="journal article" date="2003" name="Nature">
        <title>Global analysis of protein localization in budding yeast.</title>
        <authorList>
            <person name="Huh W.-K."/>
            <person name="Falvo J.V."/>
            <person name="Gerke L.C."/>
            <person name="Carroll A.S."/>
            <person name="Howson R.W."/>
            <person name="Weissman J.S."/>
            <person name="O'Shea E.K."/>
        </authorList>
    </citation>
    <scope>SUBCELLULAR LOCATION [LARGE SCALE ANALYSIS]</scope>
</reference>
<reference key="7">
    <citation type="journal article" date="2008" name="Mol. Cell. Proteomics">
        <title>A multidimensional chromatography technology for in-depth phosphoproteome analysis.</title>
        <authorList>
            <person name="Albuquerque C.P."/>
            <person name="Smolka M.B."/>
            <person name="Payne S.H."/>
            <person name="Bafna V."/>
            <person name="Eng J."/>
            <person name="Zhou H."/>
        </authorList>
    </citation>
    <scope>PHOSPHORYLATION [LARGE SCALE ANALYSIS] AT SER-1001</scope>
    <scope>IDENTIFICATION BY MASS SPECTROMETRY [LARGE SCALE ANALYSIS]</scope>
</reference>
<reference key="8">
    <citation type="journal article" date="2009" name="Science">
        <title>Global analysis of Cdk1 substrate phosphorylation sites provides insights into evolution.</title>
        <authorList>
            <person name="Holt L.J."/>
            <person name="Tuch B.B."/>
            <person name="Villen J."/>
            <person name="Johnson A.D."/>
            <person name="Gygi S.P."/>
            <person name="Morgan D.O."/>
        </authorList>
    </citation>
    <scope>PHOSPHORYLATION [LARGE SCALE ANALYSIS] AT SER-1001; SER-1007 AND SER-1010</scope>
    <scope>IDENTIFICATION BY MASS SPECTROMETRY [LARGE SCALE ANALYSIS]</scope>
</reference>
<reference key="9">
    <citation type="journal article" date="2012" name="Proc. Natl. Acad. Sci. U.S.A.">
        <title>N-terminal acetylome analyses and functional insights of the N-terminal acetyltransferase NatB.</title>
        <authorList>
            <person name="Van Damme P."/>
            <person name="Lasa M."/>
            <person name="Polevoda B."/>
            <person name="Gazquez C."/>
            <person name="Elosegui-Artola A."/>
            <person name="Kim D.S."/>
            <person name="De Juan-Pardo E."/>
            <person name="Demeyer K."/>
            <person name="Hole K."/>
            <person name="Larrea E."/>
            <person name="Timmerman E."/>
            <person name="Prieto J."/>
            <person name="Arnesen T."/>
            <person name="Sherman F."/>
            <person name="Gevaert K."/>
            <person name="Aldabe R."/>
        </authorList>
    </citation>
    <scope>IDENTIFICATION BY MASS SPECTROMETRY [LARGE SCALE ANALYSIS]</scope>
</reference>
<reference key="10">
    <citation type="journal article" date="2014" name="J. Biol. Chem.">
        <title>A single acetylation of 18 S rRNA is essential for biogenesis of the small ribosomal subunit in Saccharomyces cerevisiae.</title>
        <authorList>
            <person name="Ito S."/>
            <person name="Akamatsu Y."/>
            <person name="Noma A."/>
            <person name="Kimura S."/>
            <person name="Miyauchi K."/>
            <person name="Ikeuchi Y."/>
            <person name="Suzuki T."/>
            <person name="Suzuki T."/>
        </authorList>
    </citation>
    <scope>FUNCTION</scope>
    <scope>CATALYTIC ACTIVITY</scope>
</reference>
<reference key="11">
    <citation type="journal article" date="2015" name="Nucleic Acids Res.">
        <title>Yeast Kre33 and human NAT10 are conserved 18S rRNA cytosine acetyltransferases that modify tRNAs assisted by the adaptor Tan1/THUMPD1.</title>
        <authorList>
            <person name="Sharma S."/>
            <person name="Langhendries J.L."/>
            <person name="Watzinger P."/>
            <person name="Koetter P."/>
            <person name="Entian K.D."/>
            <person name="Lafontaine D.L."/>
        </authorList>
    </citation>
    <scope>FUNCTION</scope>
    <scope>CATALYTIC ACTIVITY</scope>
    <scope>MUTAGENESIS OF LYS-289; HIS-545 AND ARG-637</scope>
    <scope>INTERACTION WITH TAN1</scope>
    <scope>DISRUPTION PHENOTYPE</scope>
</reference>
<sequence length="1056" mass="119348">MAKKAIDSRIPSLIRNGVQTKQRSIFVIVGDRARNQLPNLHYLMMSADLKMNKSVLWAYKKKLLGFTSHRKKRENKIKKEIKRGTREVNEMDPFESFISNQNIRYVYYKESEKILGNTYGMCILQDFEALTPNLLARTIETVEGGGIVVILLKSMSSLKQLYTMTMDVHARYRTEAHGDVVARFNERFILSLGSNPNCLVVDDELNVLPLSGAKNVKPLPPKEDDELPPKQLELQELKESLEDVQPAGSLVSLSKTVNQAHAILSFIDAISEKTLNFTVALTAGRGRGKSAALGISIAAAVSHGYSNIFVTSPSPENLKTLFEFIFKGFDALGYQEHIDYDIIQSTNPDFNKAIVRVDIKRDHRQTIQYIVPQDHQVLGQAELVVIDEAAAIPLPIVKNLLGPYLVFMASTINGYEGTGRSLSLKLIQQLRNQNNTSGRESTQTAVVSRDNKEKDSHLHSQSRQLREISLDEPIRYAPGDPIEKWLNKLLCLDVTLIKNPRFATRGTPHPSQCNLFVVNRDTLFSYHPVSENFLEKMMALYVSSHYKNSPNDLQLMSDAPAHKLFVLLPPIDPKDGGRIPDPLCVIQIALEGEISKESVRNSLSRGQRAGGDLIPWLISQQFQDEEFASLSGARIVRIATNPEYASMGYGSRAIELLRDYFEGKFTDMSEDVRPKDYSIKRVSDKELAKTNLLKDDVKLRDAKTLPPLLLKLSEQPPHYLHYLGVSYGLTQSLHKFWKNNSFVPVYLRQTANDLTGEHTCVMLNVLEGRESNWLVEFAKDFRKRFLSLLSYDFHKFTAVQALSVIESSKKAQDLSDDEKHDNKELTRTHLDDIFSPFDLKRLDSYSNNLLDYHVIGDMIPMLALLYFGDKMGDSVKLSSVQSAILLAIGLQRKNIDTIAKELNLPSNQTIAMFAKIMRKMSQYFRQLLSQSIEETLPNIKDDAIAEMDGEEIKNYNAAEALDQMEEDLEEAGSEAVQAMREKQKELINSLNLDKYAINDNSEEWAESQKSLEIAAKAKGVVSLKTGKKRTTEKAEDIYRQEMKAMKKPRKSKKAAN</sequence>
<dbReference type="EC" id="2.3.1.-" evidence="2"/>
<dbReference type="EMBL" id="Z46843">
    <property type="protein sequence ID" value="CAA86893.1"/>
    <property type="molecule type" value="Genomic_DNA"/>
</dbReference>
<dbReference type="EMBL" id="Z71408">
    <property type="protein sequence ID" value="CAA96014.1"/>
    <property type="molecule type" value="Genomic_DNA"/>
</dbReference>
<dbReference type="EMBL" id="BK006947">
    <property type="protein sequence ID" value="DAA10416.1"/>
    <property type="molecule type" value="Genomic_DNA"/>
</dbReference>
<dbReference type="PIR" id="S55151">
    <property type="entry name" value="S55151"/>
</dbReference>
<dbReference type="RefSeq" id="NP_014267.1">
    <property type="nucleotide sequence ID" value="NM_001182970.1"/>
</dbReference>
<dbReference type="PDB" id="5WLC">
    <property type="method" value="EM"/>
    <property type="resolution" value="3.80 A"/>
    <property type="chains" value="LX/LY=1-208"/>
</dbReference>
<dbReference type="PDB" id="6KE6">
    <property type="method" value="EM"/>
    <property type="resolution" value="3.40 A"/>
    <property type="chains" value="RL/RM=1-1056"/>
</dbReference>
<dbReference type="PDB" id="6LQP">
    <property type="method" value="EM"/>
    <property type="resolution" value="3.20 A"/>
    <property type="chains" value="RL/RM=1-1056"/>
</dbReference>
<dbReference type="PDB" id="6LQQ">
    <property type="method" value="EM"/>
    <property type="resolution" value="4.10 A"/>
    <property type="chains" value="RL/RM=1-1056"/>
</dbReference>
<dbReference type="PDB" id="6LQR">
    <property type="method" value="EM"/>
    <property type="resolution" value="8.60 A"/>
    <property type="chains" value="RL/RM=1-1056"/>
</dbReference>
<dbReference type="PDB" id="6LQU">
    <property type="method" value="EM"/>
    <property type="resolution" value="3.70 A"/>
    <property type="chains" value="RL/RM=1-1056"/>
</dbReference>
<dbReference type="PDB" id="6LQV">
    <property type="method" value="EM"/>
    <property type="resolution" value="4.80 A"/>
    <property type="chains" value="RL/RM=1-1056"/>
</dbReference>
<dbReference type="PDB" id="6ZQB">
    <property type="method" value="EM"/>
    <property type="resolution" value="3.90 A"/>
    <property type="chains" value="JA/JB=1-1056"/>
</dbReference>
<dbReference type="PDB" id="6ZQC">
    <property type="method" value="EM"/>
    <property type="resolution" value="3.80 A"/>
    <property type="chains" value="JA/JB=1-1056"/>
</dbReference>
<dbReference type="PDB" id="7AJT">
    <property type="method" value="EM"/>
    <property type="resolution" value="4.60 A"/>
    <property type="chains" value="JA/JB=1-1056"/>
</dbReference>
<dbReference type="PDB" id="7D63">
    <property type="method" value="EM"/>
    <property type="resolution" value="12.30 A"/>
    <property type="chains" value="RL/RM=1-1056"/>
</dbReference>
<dbReference type="PDB" id="7SUK">
    <property type="method" value="EM"/>
    <property type="resolution" value="3.99 A"/>
    <property type="chains" value="LX/LY=2-924"/>
</dbReference>
<dbReference type="PDBsum" id="5WLC"/>
<dbReference type="PDBsum" id="6KE6"/>
<dbReference type="PDBsum" id="6LQP"/>
<dbReference type="PDBsum" id="6LQQ"/>
<dbReference type="PDBsum" id="6LQR"/>
<dbReference type="PDBsum" id="6LQU"/>
<dbReference type="PDBsum" id="6LQV"/>
<dbReference type="PDBsum" id="6ZQB"/>
<dbReference type="PDBsum" id="6ZQC"/>
<dbReference type="PDBsum" id="7AJT"/>
<dbReference type="PDBsum" id="7D63"/>
<dbReference type="PDBsum" id="7SUK"/>
<dbReference type="EMDB" id="EMD-0949"/>
<dbReference type="EMDB" id="EMD-0950"/>
<dbReference type="EMDB" id="EMD-0951"/>
<dbReference type="EMDB" id="EMD-0954"/>
<dbReference type="EMDB" id="EMD-0955"/>
<dbReference type="EMDB" id="EMD-11358"/>
<dbReference type="EMDB" id="EMD-11359"/>
<dbReference type="EMDB" id="EMD-11807"/>
<dbReference type="EMDB" id="EMD-25441"/>
<dbReference type="EMDB" id="EMD-30588"/>
<dbReference type="EMDB" id="EMD-8859"/>
<dbReference type="EMDB" id="EMD-9964"/>
<dbReference type="SMR" id="P53914"/>
<dbReference type="BioGRID" id="35695">
    <property type="interactions" value="280"/>
</dbReference>
<dbReference type="ComplexPortal" id="CPX-1604">
    <property type="entry name" value="Small ribosomal subunit processome"/>
</dbReference>
<dbReference type="DIP" id="DIP-6588N"/>
<dbReference type="FunCoup" id="P53914">
    <property type="interactions" value="1468"/>
</dbReference>
<dbReference type="IntAct" id="P53914">
    <property type="interactions" value="146"/>
</dbReference>
<dbReference type="MINT" id="P53914"/>
<dbReference type="STRING" id="4932.YNL132W"/>
<dbReference type="iPTMnet" id="P53914"/>
<dbReference type="PaxDb" id="4932-YNL132W"/>
<dbReference type="PeptideAtlas" id="P53914"/>
<dbReference type="EnsemblFungi" id="YNL132W_mRNA">
    <property type="protein sequence ID" value="YNL132W"/>
    <property type="gene ID" value="YNL132W"/>
</dbReference>
<dbReference type="GeneID" id="855591"/>
<dbReference type="KEGG" id="sce:YNL132W"/>
<dbReference type="AGR" id="SGD:S000005076"/>
<dbReference type="SGD" id="S000005076">
    <property type="gene designation" value="KRE33"/>
</dbReference>
<dbReference type="VEuPathDB" id="FungiDB:YNL132W"/>
<dbReference type="eggNOG" id="KOG2036">
    <property type="taxonomic scope" value="Eukaryota"/>
</dbReference>
<dbReference type="GeneTree" id="ENSGT00390000009140"/>
<dbReference type="HOGENOM" id="CLU_004652_0_0_1"/>
<dbReference type="InParanoid" id="P53914"/>
<dbReference type="OMA" id="HLHYIMS"/>
<dbReference type="OrthoDB" id="10067491at2759"/>
<dbReference type="BioCyc" id="YEAST:G3O-33152-MONOMER"/>
<dbReference type="BioGRID-ORCS" id="855591">
    <property type="hits" value="2 hits in 10 CRISPR screens"/>
</dbReference>
<dbReference type="CD-CODE" id="BDAE0F88">
    <property type="entry name" value="Nucleolus"/>
</dbReference>
<dbReference type="CD-CODE" id="E03F929F">
    <property type="entry name" value="Stress granule"/>
</dbReference>
<dbReference type="PRO" id="PR:P53914"/>
<dbReference type="Proteomes" id="UP000002311">
    <property type="component" value="Chromosome XIV"/>
</dbReference>
<dbReference type="RNAct" id="P53914">
    <property type="molecule type" value="protein"/>
</dbReference>
<dbReference type="GO" id="GO:0030686">
    <property type="term" value="C:90S preribosome"/>
    <property type="evidence" value="ECO:0007005"/>
    <property type="project" value="SGD"/>
</dbReference>
<dbReference type="GO" id="GO:0005730">
    <property type="term" value="C:nucleolus"/>
    <property type="evidence" value="ECO:0000314"/>
    <property type="project" value="ComplexPortal"/>
</dbReference>
<dbReference type="GO" id="GO:0030688">
    <property type="term" value="C:preribosome, small subunit precursor"/>
    <property type="evidence" value="ECO:0000314"/>
    <property type="project" value="GO_Central"/>
</dbReference>
<dbReference type="GO" id="GO:0032040">
    <property type="term" value="C:small-subunit processome"/>
    <property type="evidence" value="ECO:0000353"/>
    <property type="project" value="ComplexPortal"/>
</dbReference>
<dbReference type="GO" id="GO:1990883">
    <property type="term" value="F:18S rRNA cytidine N-acetyltransferase activity"/>
    <property type="evidence" value="ECO:0000314"/>
    <property type="project" value="SGD"/>
</dbReference>
<dbReference type="GO" id="GO:0005524">
    <property type="term" value="F:ATP binding"/>
    <property type="evidence" value="ECO:0007669"/>
    <property type="project" value="UniProtKB-UniRule"/>
</dbReference>
<dbReference type="GO" id="GO:0030515">
    <property type="term" value="F:snoRNA binding"/>
    <property type="evidence" value="ECO:0000314"/>
    <property type="project" value="SGD"/>
</dbReference>
<dbReference type="GO" id="GO:0000049">
    <property type="term" value="F:tRNA binding"/>
    <property type="evidence" value="ECO:0000314"/>
    <property type="project" value="SGD"/>
</dbReference>
<dbReference type="GO" id="GO:0051392">
    <property type="term" value="F:tRNA N4-acetyltransferase activity"/>
    <property type="evidence" value="ECO:0000318"/>
    <property type="project" value="GO_Central"/>
</dbReference>
<dbReference type="GO" id="GO:0030490">
    <property type="term" value="P:maturation of SSU-rRNA"/>
    <property type="evidence" value="ECO:0000303"/>
    <property type="project" value="ComplexPortal"/>
</dbReference>
<dbReference type="GO" id="GO:0016556">
    <property type="term" value="P:mRNA modification"/>
    <property type="evidence" value="ECO:0000315"/>
    <property type="project" value="SGD"/>
</dbReference>
<dbReference type="GO" id="GO:0042274">
    <property type="term" value="P:ribosomal small subunit biogenesis"/>
    <property type="evidence" value="ECO:0000315"/>
    <property type="project" value="SGD"/>
</dbReference>
<dbReference type="GO" id="GO:1904812">
    <property type="term" value="P:rRNA acetylation involved in maturation of SSU-rRNA"/>
    <property type="evidence" value="ECO:0000318"/>
    <property type="project" value="GO_Central"/>
</dbReference>
<dbReference type="GO" id="GO:0051391">
    <property type="term" value="P:tRNA acetylation"/>
    <property type="evidence" value="ECO:0000318"/>
    <property type="project" value="GO_Central"/>
</dbReference>
<dbReference type="GO" id="GO:0002101">
    <property type="term" value="P:tRNA wobble cytosine modification"/>
    <property type="evidence" value="ECO:0000318"/>
    <property type="project" value="GO_Central"/>
</dbReference>
<dbReference type="FunFam" id="3.40.50.11040:FF:000002">
    <property type="entry name" value="RNA cytidine acetyltransferase"/>
    <property type="match status" value="1"/>
</dbReference>
<dbReference type="FunFam" id="3.40.50.300:FF:002218">
    <property type="entry name" value="tRNA(Met) cytidine acetyltransferase TmcA"/>
    <property type="match status" value="1"/>
</dbReference>
<dbReference type="Gene3D" id="3.40.50.11040">
    <property type="match status" value="1"/>
</dbReference>
<dbReference type="Gene3D" id="3.40.630.30">
    <property type="match status" value="1"/>
</dbReference>
<dbReference type="Gene3D" id="3.40.50.300">
    <property type="entry name" value="P-loop containing nucleotide triphosphate hydrolases"/>
    <property type="match status" value="1"/>
</dbReference>
<dbReference type="HAMAP" id="MF_03211">
    <property type="entry name" value="RNA_acetyltr_Nat10"/>
    <property type="match status" value="1"/>
</dbReference>
<dbReference type="InterPro" id="IPR000182">
    <property type="entry name" value="GNAT_dom"/>
</dbReference>
<dbReference type="InterPro" id="IPR033688">
    <property type="entry name" value="NAT10"/>
</dbReference>
<dbReference type="InterPro" id="IPR007807">
    <property type="entry name" value="NAT10/TcmA_helicase"/>
</dbReference>
<dbReference type="InterPro" id="IPR027417">
    <property type="entry name" value="P-loop_NTPase"/>
</dbReference>
<dbReference type="InterPro" id="IPR032672">
    <property type="entry name" value="TmcA/NAT10/Kre33"/>
</dbReference>
<dbReference type="InterPro" id="IPR013562">
    <property type="entry name" value="TmcA_N"/>
</dbReference>
<dbReference type="InterPro" id="IPR027992">
    <property type="entry name" value="tRNA_bind_dom"/>
</dbReference>
<dbReference type="PANTHER" id="PTHR10925">
    <property type="entry name" value="N-ACETYLTRANSFERASE 10"/>
    <property type="match status" value="1"/>
</dbReference>
<dbReference type="PANTHER" id="PTHR10925:SF5">
    <property type="entry name" value="RNA CYTIDINE ACETYLTRANSFERASE"/>
    <property type="match status" value="1"/>
</dbReference>
<dbReference type="Pfam" id="PF13718">
    <property type="entry name" value="GNAT_acetyltr_2"/>
    <property type="match status" value="1"/>
</dbReference>
<dbReference type="Pfam" id="PF05127">
    <property type="entry name" value="NAT10_TcmA_helicase"/>
    <property type="match status" value="1"/>
</dbReference>
<dbReference type="Pfam" id="PF08351">
    <property type="entry name" value="TmcA_N"/>
    <property type="match status" value="1"/>
</dbReference>
<dbReference type="Pfam" id="PF13725">
    <property type="entry name" value="tRNA_bind_2"/>
    <property type="match status" value="1"/>
</dbReference>